<accession>Q1IFP3</accession>
<protein>
    <recommendedName>
        <fullName evidence="1">L-seryl-tRNA(Sec) selenium transferase</fullName>
        <ecNumber evidence="1">2.9.1.1</ecNumber>
    </recommendedName>
    <alternativeName>
        <fullName evidence="1">Selenocysteine synthase</fullName>
        <shortName evidence="1">Sec synthase</shortName>
    </alternativeName>
    <alternativeName>
        <fullName evidence="1">Selenocysteinyl-tRNA(Sec) synthase</fullName>
    </alternativeName>
</protein>
<feature type="chain" id="PRO_1000050376" description="L-seryl-tRNA(Sec) selenium transferase">
    <location>
        <begin position="1"/>
        <end position="475"/>
    </location>
</feature>
<feature type="modified residue" description="N6-(pyridoxal phosphate)lysine" evidence="1">
    <location>
        <position position="297"/>
    </location>
</feature>
<keyword id="KW-0963">Cytoplasm</keyword>
<keyword id="KW-0648">Protein biosynthesis</keyword>
<keyword id="KW-0663">Pyridoxal phosphate</keyword>
<keyword id="KW-0711">Selenium</keyword>
<keyword id="KW-0808">Transferase</keyword>
<name>SELA_PSEE4</name>
<reference key="1">
    <citation type="journal article" date="2006" name="Nat. Biotechnol.">
        <title>Complete genome sequence of the entomopathogenic and metabolically versatile soil bacterium Pseudomonas entomophila.</title>
        <authorList>
            <person name="Vodovar N."/>
            <person name="Vallenet D."/>
            <person name="Cruveiller S."/>
            <person name="Rouy Z."/>
            <person name="Barbe V."/>
            <person name="Acosta C."/>
            <person name="Cattolico L."/>
            <person name="Jubin C."/>
            <person name="Lajus A."/>
            <person name="Segurens B."/>
            <person name="Vacherie B."/>
            <person name="Wincker P."/>
            <person name="Weissenbach J."/>
            <person name="Lemaitre B."/>
            <person name="Medigue C."/>
            <person name="Boccard F."/>
        </authorList>
    </citation>
    <scope>NUCLEOTIDE SEQUENCE [LARGE SCALE GENOMIC DNA]</scope>
    <source>
        <strain>L48</strain>
    </source>
</reference>
<dbReference type="EC" id="2.9.1.1" evidence="1"/>
<dbReference type="EMBL" id="CT573326">
    <property type="protein sequence ID" value="CAK13511.1"/>
    <property type="molecule type" value="Genomic_DNA"/>
</dbReference>
<dbReference type="RefSeq" id="WP_011531945.1">
    <property type="nucleotide sequence ID" value="NC_008027.1"/>
</dbReference>
<dbReference type="SMR" id="Q1IFP3"/>
<dbReference type="STRING" id="384676.PSEEN0568"/>
<dbReference type="GeneID" id="32803896"/>
<dbReference type="KEGG" id="pen:PSEEN0568"/>
<dbReference type="eggNOG" id="COG1921">
    <property type="taxonomic scope" value="Bacteria"/>
</dbReference>
<dbReference type="HOGENOM" id="CLU_038142_1_0_6"/>
<dbReference type="OrthoDB" id="9787096at2"/>
<dbReference type="UniPathway" id="UPA00906">
    <property type="reaction ID" value="UER00896"/>
</dbReference>
<dbReference type="Proteomes" id="UP000000658">
    <property type="component" value="Chromosome"/>
</dbReference>
<dbReference type="GO" id="GO:0005737">
    <property type="term" value="C:cytoplasm"/>
    <property type="evidence" value="ECO:0007669"/>
    <property type="project" value="UniProtKB-SubCell"/>
</dbReference>
<dbReference type="GO" id="GO:0004125">
    <property type="term" value="F:L-seryl-tRNA(Sec) selenium transferase activity"/>
    <property type="evidence" value="ECO:0007669"/>
    <property type="project" value="UniProtKB-UniRule"/>
</dbReference>
<dbReference type="GO" id="GO:0001717">
    <property type="term" value="P:conversion of seryl-tRNAsec to selenocys-tRNAsec"/>
    <property type="evidence" value="ECO:0007669"/>
    <property type="project" value="UniProtKB-UniRule"/>
</dbReference>
<dbReference type="GO" id="GO:0001514">
    <property type="term" value="P:selenocysteine incorporation"/>
    <property type="evidence" value="ECO:0007669"/>
    <property type="project" value="UniProtKB-UniRule"/>
</dbReference>
<dbReference type="FunFam" id="3.40.640.10:FF:000028">
    <property type="entry name" value="L-seryl-tRNA(Sec) selenium transferase"/>
    <property type="match status" value="1"/>
</dbReference>
<dbReference type="Gene3D" id="3.90.1150.180">
    <property type="match status" value="1"/>
</dbReference>
<dbReference type="Gene3D" id="3.40.640.10">
    <property type="entry name" value="Type I PLP-dependent aspartate aminotransferase-like (Major domain)"/>
    <property type="match status" value="1"/>
</dbReference>
<dbReference type="HAMAP" id="MF_00423">
    <property type="entry name" value="SelA"/>
    <property type="match status" value="1"/>
</dbReference>
<dbReference type="InterPro" id="IPR015424">
    <property type="entry name" value="PyrdxlP-dep_Trfase"/>
</dbReference>
<dbReference type="InterPro" id="IPR015421">
    <property type="entry name" value="PyrdxlP-dep_Trfase_major"/>
</dbReference>
<dbReference type="InterPro" id="IPR018319">
    <property type="entry name" value="SelA-like"/>
</dbReference>
<dbReference type="InterPro" id="IPR004534">
    <property type="entry name" value="SelA_trans"/>
</dbReference>
<dbReference type="InterPro" id="IPR025862">
    <property type="entry name" value="SelA_trans_N_dom"/>
</dbReference>
<dbReference type="NCBIfam" id="TIGR00474">
    <property type="entry name" value="selA"/>
    <property type="match status" value="1"/>
</dbReference>
<dbReference type="PANTHER" id="PTHR32328">
    <property type="entry name" value="L-SERYL-TRNA(SEC) SELENIUM TRANSFERASE"/>
    <property type="match status" value="1"/>
</dbReference>
<dbReference type="PANTHER" id="PTHR32328:SF0">
    <property type="entry name" value="L-SERYL-TRNA(SEC) SELENIUM TRANSFERASE"/>
    <property type="match status" value="1"/>
</dbReference>
<dbReference type="Pfam" id="PF12390">
    <property type="entry name" value="Se-cys_synth_N"/>
    <property type="match status" value="1"/>
</dbReference>
<dbReference type="Pfam" id="PF03841">
    <property type="entry name" value="SelA"/>
    <property type="match status" value="1"/>
</dbReference>
<dbReference type="SUPFAM" id="SSF53383">
    <property type="entry name" value="PLP-dependent transferases"/>
    <property type="match status" value="1"/>
</dbReference>
<comment type="function">
    <text evidence="1">Converts seryl-tRNA(Sec) to selenocysteinyl-tRNA(Sec) required for selenoprotein biosynthesis.</text>
</comment>
<comment type="catalytic activity">
    <reaction evidence="1">
        <text>L-seryl-tRNA(Sec) + selenophosphate + H(+) = L-selenocysteinyl-tRNA(Sec) + phosphate</text>
        <dbReference type="Rhea" id="RHEA:22728"/>
        <dbReference type="Rhea" id="RHEA-COMP:9742"/>
        <dbReference type="Rhea" id="RHEA-COMP:9743"/>
        <dbReference type="ChEBI" id="CHEBI:15378"/>
        <dbReference type="ChEBI" id="CHEBI:16144"/>
        <dbReference type="ChEBI" id="CHEBI:43474"/>
        <dbReference type="ChEBI" id="CHEBI:78533"/>
        <dbReference type="ChEBI" id="CHEBI:78573"/>
        <dbReference type="EC" id="2.9.1.1"/>
    </reaction>
</comment>
<comment type="cofactor">
    <cofactor evidence="1">
        <name>pyridoxal 5'-phosphate</name>
        <dbReference type="ChEBI" id="CHEBI:597326"/>
    </cofactor>
</comment>
<comment type="pathway">
    <text evidence="1">Aminoacyl-tRNA biosynthesis; selenocysteinyl-tRNA(Sec) biosynthesis; selenocysteinyl-tRNA(Sec) from L-seryl-tRNA(Sec) (bacterial route): step 1/1.</text>
</comment>
<comment type="subcellular location">
    <subcellularLocation>
        <location evidence="1">Cytoplasm</location>
    </subcellularLocation>
</comment>
<comment type="similarity">
    <text evidence="1">Belongs to the SelA family.</text>
</comment>
<proteinExistence type="inferred from homology"/>
<organism>
    <name type="scientific">Pseudomonas entomophila (strain L48)</name>
    <dbReference type="NCBI Taxonomy" id="384676"/>
    <lineage>
        <taxon>Bacteria</taxon>
        <taxon>Pseudomonadati</taxon>
        <taxon>Pseudomonadota</taxon>
        <taxon>Gammaproteobacteria</taxon>
        <taxon>Pseudomonadales</taxon>
        <taxon>Pseudomonadaceae</taxon>
        <taxon>Pseudomonas</taxon>
    </lineage>
</organism>
<sequence>MSSSLASDTPRLPSIDTLLRHTVCAPLLDRHGRDAVLATLRQLLDDLREPARLGQLSAAELAAEVLLGRAGERLAIQQRSQVRRVFNLTGTVLHTNLGRALLPEEAIDAMQTAARYPLNLEFDLDTGKRGDRDDLIEGLIRELTGAEAVTVVNNNAAAVLLALNSLGARKEGVISRGELIEIGGAFRIPDIMARAGVKLHEIGTTNRTHARDYEGAINPRTGLLMRVHCSNYSIQGFTTQVPTAELARIAHEHGLPLLEDLGSGSLLDLTRWGLPAEPTVRQALADGADIVTFSGDKLLGGPQAGIIVGRKDLIAKIKKNPLKRALRVDKITLAALEAVLALYRNPDRLAERLPSLRLLTRPQAEIAAQAERLAPELAARLGAQWEVRVESALGMIGSGSQPVARLPSAALCLRPQVSKKLRGRSLHVLERALRDLPVPVLGRIYDDALWLDLRQLDDEAQWLAQLPALQLGPVQ</sequence>
<evidence type="ECO:0000255" key="1">
    <source>
        <dbReference type="HAMAP-Rule" id="MF_00423"/>
    </source>
</evidence>
<gene>
    <name evidence="1" type="primary">selA</name>
    <name type="ordered locus">PSEEN0568</name>
</gene>